<organism>
    <name type="scientific">Staphylococcus aureus (strain COL)</name>
    <dbReference type="NCBI Taxonomy" id="93062"/>
    <lineage>
        <taxon>Bacteria</taxon>
        <taxon>Bacillati</taxon>
        <taxon>Bacillota</taxon>
        <taxon>Bacilli</taxon>
        <taxon>Bacillales</taxon>
        <taxon>Staphylococcaceae</taxon>
        <taxon>Staphylococcus</taxon>
    </lineage>
</organism>
<keyword id="KW-0002">3D-structure</keyword>
<keyword id="KW-0963">Cytoplasm</keyword>
<keyword id="KW-0275">Fatty acid biosynthesis</keyword>
<keyword id="KW-0276">Fatty acid metabolism</keyword>
<keyword id="KW-0444">Lipid biosynthesis</keyword>
<keyword id="KW-0443">Lipid metabolism</keyword>
<keyword id="KW-0596">Phosphopantetheine</keyword>
<keyword id="KW-0597">Phosphoprotein</keyword>
<gene>
    <name evidence="1" type="primary">acpP</name>
    <name type="ordered locus">SACOL1247</name>
</gene>
<name>ACP_STAAC</name>
<sequence length="77" mass="8549">MENFDKVKDIIVDRLGVDADKVTEDASFKDDLGADSLDIAELVMELEDEFGTEIPDEEAEKINTVGDAVKFINSLEK</sequence>
<proteinExistence type="evidence at protein level"/>
<dbReference type="EMBL" id="CP000046">
    <property type="protein sequence ID" value="AAW38081.1"/>
    <property type="molecule type" value="Genomic_DNA"/>
</dbReference>
<dbReference type="RefSeq" id="WP_000426914.1">
    <property type="nucleotide sequence ID" value="NZ_JBGOFO010000002.1"/>
</dbReference>
<dbReference type="PDB" id="4DXE">
    <property type="method" value="X-ray"/>
    <property type="resolution" value="2.51 A"/>
    <property type="chains" value="G/H/I/J/K/L=1-77"/>
</dbReference>
<dbReference type="PDBsum" id="4DXE"/>
<dbReference type="SMR" id="Q5HGK0"/>
<dbReference type="KEGG" id="sac:SACOL1247"/>
<dbReference type="HOGENOM" id="CLU_108696_5_1_9"/>
<dbReference type="UniPathway" id="UPA00094"/>
<dbReference type="EvolutionaryTrace" id="Q5HGK0"/>
<dbReference type="Proteomes" id="UP000000530">
    <property type="component" value="Chromosome"/>
</dbReference>
<dbReference type="GO" id="GO:0005829">
    <property type="term" value="C:cytosol"/>
    <property type="evidence" value="ECO:0007669"/>
    <property type="project" value="TreeGrafter"/>
</dbReference>
<dbReference type="GO" id="GO:0016020">
    <property type="term" value="C:membrane"/>
    <property type="evidence" value="ECO:0007669"/>
    <property type="project" value="GOC"/>
</dbReference>
<dbReference type="GO" id="GO:0000035">
    <property type="term" value="F:acyl binding"/>
    <property type="evidence" value="ECO:0007669"/>
    <property type="project" value="TreeGrafter"/>
</dbReference>
<dbReference type="GO" id="GO:0000036">
    <property type="term" value="F:acyl carrier activity"/>
    <property type="evidence" value="ECO:0007669"/>
    <property type="project" value="UniProtKB-UniRule"/>
</dbReference>
<dbReference type="GO" id="GO:0009245">
    <property type="term" value="P:lipid A biosynthetic process"/>
    <property type="evidence" value="ECO:0007669"/>
    <property type="project" value="TreeGrafter"/>
</dbReference>
<dbReference type="FunFam" id="1.10.1200.10:FF:000001">
    <property type="entry name" value="Acyl carrier protein"/>
    <property type="match status" value="1"/>
</dbReference>
<dbReference type="Gene3D" id="1.10.1200.10">
    <property type="entry name" value="ACP-like"/>
    <property type="match status" value="1"/>
</dbReference>
<dbReference type="HAMAP" id="MF_01217">
    <property type="entry name" value="Acyl_carrier"/>
    <property type="match status" value="1"/>
</dbReference>
<dbReference type="InterPro" id="IPR003231">
    <property type="entry name" value="ACP"/>
</dbReference>
<dbReference type="InterPro" id="IPR036736">
    <property type="entry name" value="ACP-like_sf"/>
</dbReference>
<dbReference type="InterPro" id="IPR009081">
    <property type="entry name" value="PP-bd_ACP"/>
</dbReference>
<dbReference type="InterPro" id="IPR006162">
    <property type="entry name" value="Ppantetheine_attach_site"/>
</dbReference>
<dbReference type="NCBIfam" id="TIGR00517">
    <property type="entry name" value="acyl_carrier"/>
    <property type="match status" value="1"/>
</dbReference>
<dbReference type="NCBIfam" id="NF002148">
    <property type="entry name" value="PRK00982.1-2"/>
    <property type="match status" value="1"/>
</dbReference>
<dbReference type="NCBIfam" id="NF002150">
    <property type="entry name" value="PRK00982.1-4"/>
    <property type="match status" value="1"/>
</dbReference>
<dbReference type="NCBIfam" id="NF002151">
    <property type="entry name" value="PRK00982.1-5"/>
    <property type="match status" value="1"/>
</dbReference>
<dbReference type="PANTHER" id="PTHR20863">
    <property type="entry name" value="ACYL CARRIER PROTEIN"/>
    <property type="match status" value="1"/>
</dbReference>
<dbReference type="PANTHER" id="PTHR20863:SF76">
    <property type="entry name" value="CARRIER DOMAIN-CONTAINING PROTEIN"/>
    <property type="match status" value="1"/>
</dbReference>
<dbReference type="Pfam" id="PF00550">
    <property type="entry name" value="PP-binding"/>
    <property type="match status" value="1"/>
</dbReference>
<dbReference type="SUPFAM" id="SSF47336">
    <property type="entry name" value="ACP-like"/>
    <property type="match status" value="1"/>
</dbReference>
<dbReference type="PROSITE" id="PS50075">
    <property type="entry name" value="CARRIER"/>
    <property type="match status" value="1"/>
</dbReference>
<dbReference type="PROSITE" id="PS00012">
    <property type="entry name" value="PHOSPHOPANTETHEINE"/>
    <property type="match status" value="1"/>
</dbReference>
<reference key="1">
    <citation type="journal article" date="2005" name="J. Bacteriol.">
        <title>Insights on evolution of virulence and resistance from the complete genome analysis of an early methicillin-resistant Staphylococcus aureus strain and a biofilm-producing methicillin-resistant Staphylococcus epidermidis strain.</title>
        <authorList>
            <person name="Gill S.R."/>
            <person name="Fouts D.E."/>
            <person name="Archer G.L."/>
            <person name="Mongodin E.F."/>
            <person name="DeBoy R.T."/>
            <person name="Ravel J."/>
            <person name="Paulsen I.T."/>
            <person name="Kolonay J.F."/>
            <person name="Brinkac L.M."/>
            <person name="Beanan M.J."/>
            <person name="Dodson R.J."/>
            <person name="Daugherty S.C."/>
            <person name="Madupu R."/>
            <person name="Angiuoli S.V."/>
            <person name="Durkin A.S."/>
            <person name="Haft D.H."/>
            <person name="Vamathevan J.J."/>
            <person name="Khouri H."/>
            <person name="Utterback T.R."/>
            <person name="Lee C."/>
            <person name="Dimitrov G."/>
            <person name="Jiang L."/>
            <person name="Qin H."/>
            <person name="Weidman J."/>
            <person name="Tran K."/>
            <person name="Kang K.H."/>
            <person name="Hance I.R."/>
            <person name="Nelson K.E."/>
            <person name="Fraser C.M."/>
        </authorList>
    </citation>
    <scope>NUCLEOTIDE SEQUENCE [LARGE SCALE GENOMIC DNA]</scope>
    <source>
        <strain>COL</strain>
    </source>
</reference>
<feature type="chain" id="PRO_0000180188" description="Acyl carrier protein">
    <location>
        <begin position="1"/>
        <end position="77"/>
    </location>
</feature>
<feature type="domain" description="Carrier" evidence="2">
    <location>
        <begin position="1"/>
        <end position="76"/>
    </location>
</feature>
<feature type="modified residue" description="O-(pantetheine 4'-phosphoryl)serine" evidence="2">
    <location>
        <position position="36"/>
    </location>
</feature>
<feature type="helix" evidence="3">
    <location>
        <begin position="3"/>
        <end position="13"/>
    </location>
</feature>
<feature type="helix" evidence="3">
    <location>
        <begin position="19"/>
        <end position="21"/>
    </location>
</feature>
<feature type="turn" evidence="3">
    <location>
        <begin position="28"/>
        <end position="31"/>
    </location>
</feature>
<feature type="helix" evidence="3">
    <location>
        <begin position="36"/>
        <end position="49"/>
    </location>
</feature>
<feature type="helix" evidence="3">
    <location>
        <begin position="56"/>
        <end position="59"/>
    </location>
</feature>
<feature type="helix" evidence="3">
    <location>
        <begin position="65"/>
        <end position="72"/>
    </location>
</feature>
<accession>Q5HGK0</accession>
<comment type="function">
    <text evidence="1">Carrier of the growing fatty acid chain in fatty acid biosynthesis.</text>
</comment>
<comment type="pathway">
    <text evidence="1">Lipid metabolism; fatty acid biosynthesis.</text>
</comment>
<comment type="subcellular location">
    <subcellularLocation>
        <location evidence="1">Cytoplasm</location>
    </subcellularLocation>
</comment>
<comment type="PTM">
    <text evidence="1">4'-phosphopantetheine is transferred from CoA to a specific serine of apo-ACP by AcpS. This modification is essential for activity because fatty acids are bound in thioester linkage to the sulfhydryl of the prosthetic group.</text>
</comment>
<comment type="similarity">
    <text evidence="1">Belongs to the acyl carrier protein (ACP) family.</text>
</comment>
<protein>
    <recommendedName>
        <fullName evidence="1">Acyl carrier protein</fullName>
        <shortName evidence="1">ACP</shortName>
    </recommendedName>
</protein>
<evidence type="ECO:0000255" key="1">
    <source>
        <dbReference type="HAMAP-Rule" id="MF_01217"/>
    </source>
</evidence>
<evidence type="ECO:0000255" key="2">
    <source>
        <dbReference type="PROSITE-ProRule" id="PRU00258"/>
    </source>
</evidence>
<evidence type="ECO:0007829" key="3">
    <source>
        <dbReference type="PDB" id="4DXE"/>
    </source>
</evidence>